<keyword id="KW-0256">Endoplasmic reticulum</keyword>
<keyword id="KW-0349">Heme</keyword>
<keyword id="KW-0408">Iron</keyword>
<keyword id="KW-0472">Membrane</keyword>
<keyword id="KW-0479">Metal-binding</keyword>
<keyword id="KW-0503">Monooxygenase</keyword>
<keyword id="KW-0560">Oxidoreductase</keyword>
<keyword id="KW-1185">Reference proteome</keyword>
<keyword id="KW-0812">Transmembrane</keyword>
<keyword id="KW-1133">Transmembrane helix</keyword>
<sequence>MQPIVWLLGGAIALLVVVIRAAWTYGHRNQDMPSGPPTLPFIGNAHLIPKSYTHIQFTAWARQYGGLYMLKVGNSNMAVVTDRRIVKEVLDSKSSLYSHRPHSFVSHELITQGDHLLVMHYGPKWRTFRRLVHQHLMESMVDSQHLPIVNAEAIQLVRDYMLDPEHHMAHPKRFSNSITNSIVFGIRTADRHGSNMNRLYTLMEQWSEIMETGATPPVDIFPWLKRLPEALFGHYVTRARAIGAQMETLYEDILQRVEKRRSGGVHLDTFMDRVIASQDRNQLPRHQLAFIGGVLMEGGSDTSSSLTLAIVQALTLHPEVQRKAHAEIDAVVGHARSPVWDDLARLPYINMIIKEGHRWRPILPLCFPHALGQDDWVDGKFLPKGTMVVVNTWGMHMDPDHRLNQKYDPAKFVPERFAEHPALAPEYVPGAWENRDHYGYGVSRRICPGIHLAERNMFLAIAKLLWAFEFQPGPEGEPCDSDPVTGYQHGFLYCAKPYSTRPVLRSESIRETVEREFALAQREVFSTFTEG</sequence>
<evidence type="ECO:0000250" key="1">
    <source>
        <dbReference type="UniProtKB" id="A0A075TRC0"/>
    </source>
</evidence>
<evidence type="ECO:0000250" key="2">
    <source>
        <dbReference type="UniProtKB" id="A0A075TRL5"/>
    </source>
</evidence>
<evidence type="ECO:0000250" key="3">
    <source>
        <dbReference type="UniProtKB" id="P04798"/>
    </source>
</evidence>
<evidence type="ECO:0000255" key="4"/>
<evidence type="ECO:0000269" key="5">
    <source>
    </source>
</evidence>
<evidence type="ECO:0000303" key="6">
    <source>
    </source>
</evidence>
<evidence type="ECO:0000305" key="7"/>
<evidence type="ECO:0000305" key="8">
    <source>
    </source>
</evidence>
<proteinExistence type="inferred from homology"/>
<protein>
    <recommendedName>
        <fullName evidence="6">Cytochrome P450 monooxygenase acuC</fullName>
        <ecNumber evidence="8">1.-.-.-</ecNumber>
    </recommendedName>
    <alternativeName>
        <fullName evidence="6">Aculin biosynthesis cluster protein C</fullName>
    </alternativeName>
    <alternativeName>
        <fullName evidence="6">m-cresol hydrolase acuC</fullName>
    </alternativeName>
</protein>
<name>ACUC_ASPA1</name>
<organism>
    <name type="scientific">Aspergillus aculeatus (strain ATCC 16872 / CBS 172.66 / WB 5094)</name>
    <dbReference type="NCBI Taxonomy" id="690307"/>
    <lineage>
        <taxon>Eukaryota</taxon>
        <taxon>Fungi</taxon>
        <taxon>Dikarya</taxon>
        <taxon>Ascomycota</taxon>
        <taxon>Pezizomycotina</taxon>
        <taxon>Eurotiomycetes</taxon>
        <taxon>Eurotiomycetidae</taxon>
        <taxon>Eurotiales</taxon>
        <taxon>Aspergillaceae</taxon>
        <taxon>Aspergillus</taxon>
        <taxon>Aspergillus subgen. Circumdati</taxon>
    </lineage>
</organism>
<gene>
    <name evidence="6" type="primary">acuC</name>
    <name type="ORF">ASPACDRAFT_45673</name>
</gene>
<feature type="chain" id="PRO_0000450415" description="Cytochrome P450 monooxygenase acuC">
    <location>
        <begin position="1"/>
        <end position="531"/>
    </location>
</feature>
<feature type="transmembrane region" description="Helical" evidence="4">
    <location>
        <begin position="3"/>
        <end position="23"/>
    </location>
</feature>
<feature type="binding site" description="axial binding residue" evidence="3">
    <location>
        <position position="447"/>
    </location>
    <ligand>
        <name>heme</name>
        <dbReference type="ChEBI" id="CHEBI:30413"/>
    </ligand>
    <ligandPart>
        <name>Fe</name>
        <dbReference type="ChEBI" id="CHEBI:18248"/>
    </ligandPart>
</feature>
<dbReference type="EC" id="1.-.-.-" evidence="8"/>
<dbReference type="EMBL" id="KV878982">
    <property type="protein sequence ID" value="OJJ97582.1"/>
    <property type="molecule type" value="Genomic_DNA"/>
</dbReference>
<dbReference type="RefSeq" id="XP_020053922.1">
    <property type="nucleotide sequence ID" value="XM_020201650.1"/>
</dbReference>
<dbReference type="SMR" id="A0A1L9WN31"/>
<dbReference type="STRING" id="690307.A0A1L9WN31"/>
<dbReference type="GeneID" id="30975464"/>
<dbReference type="VEuPathDB" id="FungiDB:ASPACDRAFT_45673"/>
<dbReference type="OMA" id="QIRLGNC"/>
<dbReference type="OrthoDB" id="1103324at2759"/>
<dbReference type="Proteomes" id="UP000184546">
    <property type="component" value="Unassembled WGS sequence"/>
</dbReference>
<dbReference type="GO" id="GO:0005789">
    <property type="term" value="C:endoplasmic reticulum membrane"/>
    <property type="evidence" value="ECO:0007669"/>
    <property type="project" value="UniProtKB-SubCell"/>
</dbReference>
<dbReference type="GO" id="GO:0020037">
    <property type="term" value="F:heme binding"/>
    <property type="evidence" value="ECO:0007669"/>
    <property type="project" value="InterPro"/>
</dbReference>
<dbReference type="GO" id="GO:0005506">
    <property type="term" value="F:iron ion binding"/>
    <property type="evidence" value="ECO:0007669"/>
    <property type="project" value="InterPro"/>
</dbReference>
<dbReference type="GO" id="GO:0004497">
    <property type="term" value="F:monooxygenase activity"/>
    <property type="evidence" value="ECO:0007669"/>
    <property type="project" value="UniProtKB-KW"/>
</dbReference>
<dbReference type="GO" id="GO:0016705">
    <property type="term" value="F:oxidoreductase activity, acting on paired donors, with incorporation or reduction of molecular oxygen"/>
    <property type="evidence" value="ECO:0007669"/>
    <property type="project" value="InterPro"/>
</dbReference>
<dbReference type="CDD" id="cd11065">
    <property type="entry name" value="CYP64-like"/>
    <property type="match status" value="1"/>
</dbReference>
<dbReference type="Gene3D" id="1.10.630.10">
    <property type="entry name" value="Cytochrome P450"/>
    <property type="match status" value="1"/>
</dbReference>
<dbReference type="InterPro" id="IPR001128">
    <property type="entry name" value="Cyt_P450"/>
</dbReference>
<dbReference type="InterPro" id="IPR002401">
    <property type="entry name" value="Cyt_P450_E_grp-I"/>
</dbReference>
<dbReference type="InterPro" id="IPR036396">
    <property type="entry name" value="Cyt_P450_sf"/>
</dbReference>
<dbReference type="InterPro" id="IPR050364">
    <property type="entry name" value="Cytochrome_P450_fung"/>
</dbReference>
<dbReference type="PANTHER" id="PTHR46300:SF2">
    <property type="entry name" value="CYTOCHROME P450 MONOOXYGENASE ALNH-RELATED"/>
    <property type="match status" value="1"/>
</dbReference>
<dbReference type="PANTHER" id="PTHR46300">
    <property type="entry name" value="P450, PUTATIVE (EUROFUNG)-RELATED-RELATED"/>
    <property type="match status" value="1"/>
</dbReference>
<dbReference type="Pfam" id="PF00067">
    <property type="entry name" value="p450"/>
    <property type="match status" value="1"/>
</dbReference>
<dbReference type="PRINTS" id="PR00463">
    <property type="entry name" value="EP450I"/>
</dbReference>
<dbReference type="SUPFAM" id="SSF48264">
    <property type="entry name" value="Cytochrome P450"/>
    <property type="match status" value="1"/>
</dbReference>
<accession>A0A1L9WN31</accession>
<reference key="1">
    <citation type="journal article" date="2017" name="Genome Biol.">
        <title>Comparative genomics reveals high biological diversity and specific adaptations in the industrially and medically important fungal genus Aspergillus.</title>
        <authorList>
            <person name="de Vries R.P."/>
            <person name="Riley R."/>
            <person name="Wiebenga A."/>
            <person name="Aguilar-Osorio G."/>
            <person name="Amillis S."/>
            <person name="Uchima C.A."/>
            <person name="Anderluh G."/>
            <person name="Asadollahi M."/>
            <person name="Askin M."/>
            <person name="Barry K."/>
            <person name="Battaglia E."/>
            <person name="Bayram O."/>
            <person name="Benocci T."/>
            <person name="Braus-Stromeyer S.A."/>
            <person name="Caldana C."/>
            <person name="Canovas D."/>
            <person name="Cerqueira G.C."/>
            <person name="Chen F."/>
            <person name="Chen W."/>
            <person name="Choi C."/>
            <person name="Clum A."/>
            <person name="Dos Santos R.A."/>
            <person name="Damasio A.R."/>
            <person name="Diallinas G."/>
            <person name="Emri T."/>
            <person name="Fekete E."/>
            <person name="Flipphi M."/>
            <person name="Freyberg S."/>
            <person name="Gallo A."/>
            <person name="Gournas C."/>
            <person name="Habgood R."/>
            <person name="Hainaut M."/>
            <person name="Harispe M.L."/>
            <person name="Henrissat B."/>
            <person name="Hilden K.S."/>
            <person name="Hope R."/>
            <person name="Hossain A."/>
            <person name="Karabika E."/>
            <person name="Karaffa L."/>
            <person name="Karanyi Z."/>
            <person name="Krasevec N."/>
            <person name="Kuo A."/>
            <person name="Kusch H."/>
            <person name="LaButti K."/>
            <person name="Lagendijk E.L."/>
            <person name="Lapidus A."/>
            <person name="Levasseur A."/>
            <person name="Lindquist E."/>
            <person name="Lipzen A."/>
            <person name="Logrieco A.F."/>
            <person name="MacCabe A."/>
            <person name="Maekelae M.R."/>
            <person name="Malavazi I."/>
            <person name="Melin P."/>
            <person name="Meyer V."/>
            <person name="Mielnichuk N."/>
            <person name="Miskei M."/>
            <person name="Molnar A.P."/>
            <person name="Mule G."/>
            <person name="Ngan C.Y."/>
            <person name="Orejas M."/>
            <person name="Orosz E."/>
            <person name="Ouedraogo J.P."/>
            <person name="Overkamp K.M."/>
            <person name="Park H.-S."/>
            <person name="Perrone G."/>
            <person name="Piumi F."/>
            <person name="Punt P.J."/>
            <person name="Ram A.F."/>
            <person name="Ramon A."/>
            <person name="Rauscher S."/>
            <person name="Record E."/>
            <person name="Riano-Pachon D.M."/>
            <person name="Robert V."/>
            <person name="Roehrig J."/>
            <person name="Ruller R."/>
            <person name="Salamov A."/>
            <person name="Salih N.S."/>
            <person name="Samson R.A."/>
            <person name="Sandor E."/>
            <person name="Sanguinetti M."/>
            <person name="Schuetze T."/>
            <person name="Sepcic K."/>
            <person name="Shelest E."/>
            <person name="Sherlock G."/>
            <person name="Sophianopoulou V."/>
            <person name="Squina F.M."/>
            <person name="Sun H."/>
            <person name="Susca A."/>
            <person name="Todd R.B."/>
            <person name="Tsang A."/>
            <person name="Unkles S.E."/>
            <person name="van de Wiele N."/>
            <person name="van Rossen-Uffink D."/>
            <person name="Oliveira J.V."/>
            <person name="Vesth T.C."/>
            <person name="Visser J."/>
            <person name="Yu J.-H."/>
            <person name="Zhou M."/>
            <person name="Andersen M.R."/>
            <person name="Archer D.B."/>
            <person name="Baker S.E."/>
            <person name="Benoit I."/>
            <person name="Brakhage A.A."/>
            <person name="Braus G.H."/>
            <person name="Fischer R."/>
            <person name="Frisvad J.C."/>
            <person name="Goldman G.H."/>
            <person name="Houbraken J."/>
            <person name="Oakley B."/>
            <person name="Pocsi I."/>
            <person name="Scazzocchio C."/>
            <person name="Seiboth B."/>
            <person name="vanKuyk P.A."/>
            <person name="Wortman J."/>
            <person name="Dyer P.S."/>
            <person name="Grigoriev I.V."/>
        </authorList>
    </citation>
    <scope>NUCLEOTIDE SEQUENCE [LARGE SCALE GENOMIC DNA]</scope>
    <source>
        <strain>ATCC 16872 / CBS 172.66 / WB 5094</strain>
    </source>
</reference>
<reference key="2">
    <citation type="journal article" date="2015" name="ChemBioChem">
        <title>Investigation of a 6-MSA Synthase Gene Cluster in Aspergillus aculeatus Reveals 6-MSA-derived Aculinic Acid, Aculins A-B and Epi-Aculin A.</title>
        <authorList>
            <person name="Petersen L.M."/>
            <person name="Holm D.K."/>
            <person name="Gotfredsen C.H."/>
            <person name="Mortensen U.H."/>
            <person name="Larsen T.O."/>
        </authorList>
    </citation>
    <scope>FUNCTION</scope>
    <scope>PATHWAY</scope>
</reference>
<comment type="function">
    <text evidence="1 5 8">Cytochrome P450 monooxygenase; part of the gene cluster that mediates the biosynthesis of aculins (PubMed:26374386). The pathway begins with the synthesis of 6-methylsalicylic acid by the polyketide synthase (PKS) acuA via condensation of acetate and malonate units (PubMed:26374386). The 6-methylsalicylic acid decarboxylase acuB then catalyzes the decarboxylation of 6-methylsalicylic acid to yield m-cresol (also known as 3-methylphenol) (Probable). These first reactions occur in the cytosol (By similarity). The intermediate m-cresol is then transported into the endoplasmic reticulum where the cytochrome P450 monooxygenase acuC converts it to m-hydroxybenzyl alcohol, which is further converted to gentisyl alcohol by the cytochrome P450 monooxygenase acuD (Probable). Gentisyl alcohol is further oxidized by the oxidoreductase acuE that probably catalyzes hydroxylation of the aromatic ring (Probable). The aromatic system might then be opened by oxidation through a Baeyer-Villiger type of oxidation, which could be catalyzed by acuF, with the carboxylic acid at C-1 subsequently reduced to an aldehyde by acuG (Probable). Subsequently, a hemiacetal is formed, before the dehydrogenase acuH would reduce the double bond between C-4 and C-6 (Probable). Finally, keto-enol tautomerism results in formation of aculinic acid, which exists as two diastereomers (both R/S configurations at C-1) by non-enzymatic hemiacetal formation (Probable). The carboxypeptidase acuI could be involved in the linking of aculinic acid to an aculene A moiety produced by the aculene biosynthesis cluster and which leads to the production of aculin A (Probable). AcuI may also be involved in the attachment of proline to aculinic acid to form epi-aculins A and B (Probable).</text>
</comment>
<comment type="catalytic activity">
    <reaction evidence="8">
        <text>3-methylphenol + reduced [NADPH--hemoprotein reductase] + O2 = 3-hydroxybenzyl alcohol + oxidized [NADPH--hemoprotein reductase] + H2O + H(+)</text>
        <dbReference type="Rhea" id="RHEA:62208"/>
        <dbReference type="Rhea" id="RHEA-COMP:11964"/>
        <dbReference type="Rhea" id="RHEA-COMP:11965"/>
        <dbReference type="ChEBI" id="CHEBI:15377"/>
        <dbReference type="ChEBI" id="CHEBI:15378"/>
        <dbReference type="ChEBI" id="CHEBI:15379"/>
        <dbReference type="ChEBI" id="CHEBI:17069"/>
        <dbReference type="ChEBI" id="CHEBI:17231"/>
        <dbReference type="ChEBI" id="CHEBI:57618"/>
        <dbReference type="ChEBI" id="CHEBI:58210"/>
    </reaction>
    <physiologicalReaction direction="left-to-right" evidence="8">
        <dbReference type="Rhea" id="RHEA:62209"/>
    </physiologicalReaction>
</comment>
<comment type="cofactor">
    <cofactor evidence="3">
        <name>heme</name>
        <dbReference type="ChEBI" id="CHEBI:30413"/>
    </cofactor>
</comment>
<comment type="pathway">
    <text evidence="8">Secondary metabolite biosynthesis.</text>
</comment>
<comment type="subcellular location">
    <subcellularLocation>
        <location evidence="2">Endoplasmic reticulum membrane</location>
        <topology evidence="4">Single-pass membrane protein</topology>
    </subcellularLocation>
</comment>
<comment type="similarity">
    <text evidence="7">Belongs to the cytochrome P450 family.</text>
</comment>